<protein>
    <recommendedName>
        <fullName>Immunoglobulin-like and fibronectin type III domain-containing protein 1</fullName>
    </recommendedName>
    <alternativeName>
        <fullName>EEF1A2-binding protein 1</fullName>
    </alternativeName>
    <alternativeName>
        <fullName>KY-interacting protein 1</fullName>
    </alternativeName>
</protein>
<keyword id="KW-0025">Alternative splicing</keyword>
<keyword id="KW-0175">Coiled coil</keyword>
<keyword id="KW-0963">Cytoplasm</keyword>
<keyword id="KW-0393">Immunoglobulin domain</keyword>
<keyword id="KW-0539">Nucleus</keyword>
<keyword id="KW-1267">Proteomics identification</keyword>
<keyword id="KW-1185">Reference proteome</keyword>
<keyword id="KW-0677">Repeat</keyword>
<proteinExistence type="evidence at protein level"/>
<sequence>MAGKLRKSHIPGVSIWQLVEEIPEGCSTPDFEQKPVTSALPEGKNAVFRAVVCGEPRPEVRWQNSKGDLSDSSKYKISSSPGSKEHVLQINKLTGEDTDLYRCTAVNAYGEAACSVRLTVIEVGFRKNRKRHREPQEDLRKELMDFRKLLKKRAPPAPKKKMDLEQIWQLLMTADRKDYEKICLKYGIVDYRGMLRRLQEMKKEQEDKMAQYINTISSLRHIRVTKDGNAKFDLELDLKDSQSKIYLYKDGEMIPYGFNNQTKHCLRRLGKRYEFQIQDLRPEDSGIYQVKVEDAVVFSTELEASAIPPRVVVPLAETHCEEQGDAVFECTLSSPCPSAAWHFRHRLLHPSDKYEVYVSPDGLTHRLVVRGARFSDMGPYSLGTGLYTSSAWLVVEAGKDKDLQSTSADHKLQSRRSGKDGRLDIYGERRDATRSSTSRYKPGTGSFSKDAQGPMGHFSQGLADMEVQPGEAATLSCTLTSDLGPGTWFKDGVKLTTQDGVIFKQDGLVHSLFITHVQGTQAGRYTFVAGDQQSEATLTVQDSPTIAPDVTEKLREPLVVKAGKPVIVKIPFQSHLPIQAAWRKDGAEVVGSSDREAQVDLGDGYTRLCLPSAGRKDCGQYSVTLRSEGGSVQAELTLQVIDKPDPPQGPMEVQDCHRAGVCLRWRPPRDNGGRTVECYVVERRQAGRSTWLKVGEAPADSTTFTDAHVEPGRKYTFRVRAVTSEGAGEALESEEILVAPEALPKAPSAPAILSASSQGITLTWTAPRGPGSAHILGYLIERRKKGSNTWTAVNDQPVPERRWTVADVRQGCQYEFRVTAVAPSGPGEPGPPSDAVFARDPMRPPGLVRNLQVTDRSNTSITLSWAGPDTQEGDEAQGYVVELCSSDSLQWLPCHVGTVPVTTYTAKGLRPGEGYFVRVTAVNEGGQSQPSALDTLVQAMPVTVCPKFLVDSSTKDLLTVKVGDTVRVPVSFEAMPMPEVTWLKDGLPLPKRSVTVTKDGLTQLLIPVAGLSDSGLYTVVLRTLQGKEVAHSFRIRVAACPQAPGPIHLQENVPGTVTAEWEPSPDEAQDVPLHYAVFTRSSAHGPWHEAADRIHTNRFTLLGILPGHEYHFRVVAKNELGASKPSDTSQPWCIPRQRDRFTVKAPCYREPDLSQKPRFLVGLRSHLLPQGCECCMSCAVQGSPRPHVTWFKNDRSLEGNPAVYSTDLLGVCSLTIPSVSPKDSGEYKAVAENTLGQAVSTATLIVIEPST</sequence>
<dbReference type="EMBL" id="AY245430">
    <property type="protein sequence ID" value="AAO92932.1"/>
    <property type="molecule type" value="mRNA"/>
</dbReference>
<dbReference type="EMBL" id="AL137493">
    <property type="protein sequence ID" value="CAB70770.2"/>
    <property type="molecule type" value="Transcribed_RNA"/>
</dbReference>
<dbReference type="EMBL" id="AC103925">
    <property type="status" value="NOT_ANNOTATED_CDS"/>
    <property type="molecule type" value="Genomic_DNA"/>
</dbReference>
<dbReference type="EMBL" id="CH471067">
    <property type="protein sequence ID" value="EAW91347.1"/>
    <property type="molecule type" value="Genomic_DNA"/>
</dbReference>
<dbReference type="EMBL" id="BC033185">
    <property type="status" value="NOT_ANNOTATED_CDS"/>
    <property type="molecule type" value="mRNA"/>
</dbReference>
<dbReference type="EMBL" id="BC131529">
    <property type="protein sequence ID" value="AAI31530.1"/>
    <property type="molecule type" value="mRNA"/>
</dbReference>
<dbReference type="CCDS" id="CCDS53455.1">
    <molecule id="Q86VF2-5"/>
</dbReference>
<dbReference type="CCDS" id="CCDS91141.1">
    <molecule id="Q86VF2-1"/>
</dbReference>
<dbReference type="PIR" id="T46475">
    <property type="entry name" value="T46475"/>
</dbReference>
<dbReference type="RefSeq" id="NP_001158058.1">
    <molecule id="Q86VF2-5"/>
    <property type="nucleotide sequence ID" value="NM_001164586.2"/>
</dbReference>
<dbReference type="RefSeq" id="NP_001354770.1">
    <molecule id="Q86VF2-1"/>
    <property type="nucleotide sequence ID" value="NM_001367841.1"/>
</dbReference>
<dbReference type="RefSeq" id="XP_011508422.1">
    <property type="nucleotide sequence ID" value="XM_011510120.2"/>
</dbReference>
<dbReference type="RefSeq" id="XP_011508423.1">
    <property type="nucleotide sequence ID" value="XM_011510121.2"/>
</dbReference>
<dbReference type="SMR" id="Q86VF2"/>
<dbReference type="BioGRID" id="124802">
    <property type="interactions" value="47"/>
</dbReference>
<dbReference type="FunCoup" id="Q86VF2">
    <property type="interactions" value="39"/>
</dbReference>
<dbReference type="IntAct" id="Q86VF2">
    <property type="interactions" value="46"/>
</dbReference>
<dbReference type="STRING" id="9606.ENSP00000334714"/>
<dbReference type="GlyGen" id="Q86VF2">
    <property type="glycosylation" value="2 sites, 1 O-linked glycan (2 sites)"/>
</dbReference>
<dbReference type="iPTMnet" id="Q86VF2"/>
<dbReference type="PhosphoSitePlus" id="Q86VF2"/>
<dbReference type="BioMuta" id="IGFN1"/>
<dbReference type="DMDM" id="205785468"/>
<dbReference type="jPOST" id="Q86VF2"/>
<dbReference type="MassIVE" id="Q86VF2"/>
<dbReference type="PaxDb" id="9606-ENSP00000334714"/>
<dbReference type="PeptideAtlas" id="Q86VF2"/>
<dbReference type="ProteomicsDB" id="30502"/>
<dbReference type="ProteomicsDB" id="69997">
    <molecule id="Q86VF2-1"/>
</dbReference>
<dbReference type="ProteomicsDB" id="69998">
    <molecule id="Q86VF2-2"/>
</dbReference>
<dbReference type="ProteomicsDB" id="69999">
    <molecule id="Q86VF2-3"/>
</dbReference>
<dbReference type="ProteomicsDB" id="70000">
    <molecule id="Q86VF2-4"/>
</dbReference>
<dbReference type="Antibodypedia" id="34499">
    <property type="antibodies" value="101 antibodies from 14 providers"/>
</dbReference>
<dbReference type="DNASU" id="91156"/>
<dbReference type="Ensembl" id="ENST00000295591.12">
    <molecule id="Q86VF2-1"/>
    <property type="protein sequence ID" value="ENSP00000295591.9"/>
    <property type="gene ID" value="ENSG00000163395.17"/>
</dbReference>
<dbReference type="Ensembl" id="ENST00000335211.9">
    <molecule id="Q86VF2-5"/>
    <property type="protein sequence ID" value="ENSP00000334714.4"/>
    <property type="gene ID" value="ENSG00000163395.17"/>
</dbReference>
<dbReference type="Ensembl" id="ENST00000437879.6">
    <molecule id="Q86VF2-4"/>
    <property type="protein sequence ID" value="ENSP00000399041.2"/>
    <property type="gene ID" value="ENSG00000163395.17"/>
</dbReference>
<dbReference type="GeneID" id="91156"/>
<dbReference type="KEGG" id="hsa:91156"/>
<dbReference type="MANE-Select" id="ENST00000335211.9">
    <molecule id="Q86VF2-5"/>
    <property type="protein sequence ID" value="ENSP00000334714.4"/>
    <property type="RefSeq nucleotide sequence ID" value="NM_001164586.2"/>
    <property type="RefSeq protein sequence ID" value="NP_001158058.1"/>
</dbReference>
<dbReference type="UCSC" id="uc001gwc.3">
    <molecule id="Q86VF2-1"/>
    <property type="organism name" value="human"/>
</dbReference>
<dbReference type="AGR" id="HGNC:24607"/>
<dbReference type="CTD" id="91156"/>
<dbReference type="DisGeNET" id="91156"/>
<dbReference type="GeneCards" id="IGFN1"/>
<dbReference type="HGNC" id="HGNC:24607">
    <property type="gene designation" value="IGFN1"/>
</dbReference>
<dbReference type="HPA" id="ENSG00000163395">
    <property type="expression patterns" value="Tissue enriched (skeletal)"/>
</dbReference>
<dbReference type="neXtProt" id="NX_Q86VF2"/>
<dbReference type="OpenTargets" id="ENSG00000163395"/>
<dbReference type="VEuPathDB" id="HostDB:ENSG00000163395"/>
<dbReference type="eggNOG" id="KOG0613">
    <property type="taxonomic scope" value="Eukaryota"/>
</dbReference>
<dbReference type="GeneTree" id="ENSGT00940000162073"/>
<dbReference type="HOGENOM" id="CLU_006405_2_1_1"/>
<dbReference type="InParanoid" id="Q86VF2"/>
<dbReference type="OMA" id="EPDFWNG"/>
<dbReference type="OrthoDB" id="504170at2759"/>
<dbReference type="PAN-GO" id="Q86VF2">
    <property type="GO annotations" value="4 GO annotations based on evolutionary models"/>
</dbReference>
<dbReference type="PhylomeDB" id="Q86VF2"/>
<dbReference type="PathwayCommons" id="Q86VF2"/>
<dbReference type="SignaLink" id="Q86VF2"/>
<dbReference type="BioGRID-ORCS" id="91156">
    <property type="hits" value="20 hits in 1070 CRISPR screens"/>
</dbReference>
<dbReference type="ChiTaRS" id="IGFN1">
    <property type="organism name" value="human"/>
</dbReference>
<dbReference type="GenomeRNAi" id="91156"/>
<dbReference type="Pharos" id="Q86VF2">
    <property type="development level" value="Tbio"/>
</dbReference>
<dbReference type="PRO" id="PR:Q86VF2"/>
<dbReference type="Proteomes" id="UP000005640">
    <property type="component" value="Chromosome 1"/>
</dbReference>
<dbReference type="RNAct" id="Q86VF2">
    <property type="molecule type" value="protein"/>
</dbReference>
<dbReference type="Bgee" id="ENSG00000163395">
    <property type="expression patterns" value="Expressed in gastrocnemius and 123 other cell types or tissues"/>
</dbReference>
<dbReference type="GO" id="GO:0005634">
    <property type="term" value="C:nucleus"/>
    <property type="evidence" value="ECO:0000250"/>
    <property type="project" value="UniProtKB"/>
</dbReference>
<dbReference type="GO" id="GO:0030018">
    <property type="term" value="C:Z disc"/>
    <property type="evidence" value="ECO:0000250"/>
    <property type="project" value="UniProtKB"/>
</dbReference>
<dbReference type="CDD" id="cd00063">
    <property type="entry name" value="FN3"/>
    <property type="match status" value="4"/>
</dbReference>
<dbReference type="FunFam" id="2.60.40.10:FF:001231">
    <property type="entry name" value="Immunoglobulin-like and fibronectin type III domain containing 1"/>
    <property type="match status" value="1"/>
</dbReference>
<dbReference type="FunFam" id="2.60.40.10:FF:001267">
    <property type="entry name" value="Immunoglobulin-like and fibronectin type III domain containing 1"/>
    <property type="match status" value="1"/>
</dbReference>
<dbReference type="FunFam" id="2.60.40.10:FF:000617">
    <property type="entry name" value="Immunoglobulin-like and fibronectin type III domain-containing 1"/>
    <property type="match status" value="1"/>
</dbReference>
<dbReference type="FunFam" id="2.60.40.10:FF:001232">
    <property type="entry name" value="Immunoglobulin-like and fibronectin type III domain-containing 1"/>
    <property type="match status" value="1"/>
</dbReference>
<dbReference type="FunFam" id="2.60.40.10:FF:001389">
    <property type="entry name" value="Immunoglobulin-like and fibronectin type III domain-containing 1"/>
    <property type="match status" value="1"/>
</dbReference>
<dbReference type="FunFam" id="2.60.40.10:FF:001435">
    <property type="entry name" value="Immunoglobulin-like and fibronectin type III domain-containing 1"/>
    <property type="match status" value="1"/>
</dbReference>
<dbReference type="FunFam" id="2.60.40.10:FF:001525">
    <property type="entry name" value="Immunoglobulin-like and fibronectin type III domain-containing 1"/>
    <property type="match status" value="1"/>
</dbReference>
<dbReference type="FunFam" id="2.60.40.10:FF:001097">
    <property type="entry name" value="Immunoglobulin-like and fibronectin type III domain-containing protein 1"/>
    <property type="match status" value="1"/>
</dbReference>
<dbReference type="FunFam" id="2.60.40.10:FF:001438">
    <property type="entry name" value="Immunoglobulin-like and fibronectin type III domain-containing protein 1"/>
    <property type="match status" value="1"/>
</dbReference>
<dbReference type="FunFam" id="2.60.40.10:FF:001401">
    <property type="entry name" value="immunoglobulin-like and fibronectin type III domain-containing protein 1"/>
    <property type="match status" value="1"/>
</dbReference>
<dbReference type="FunFam" id="2.60.40.10:FF:000060">
    <property type="entry name" value="Myosin-binding protein C, slow type"/>
    <property type="match status" value="1"/>
</dbReference>
<dbReference type="Gene3D" id="2.60.40.10">
    <property type="entry name" value="Immunoglobulins"/>
    <property type="match status" value="11"/>
</dbReference>
<dbReference type="InterPro" id="IPR003961">
    <property type="entry name" value="FN3_dom"/>
</dbReference>
<dbReference type="InterPro" id="IPR036116">
    <property type="entry name" value="FN3_sf"/>
</dbReference>
<dbReference type="InterPro" id="IPR007110">
    <property type="entry name" value="Ig-like_dom"/>
</dbReference>
<dbReference type="InterPro" id="IPR036179">
    <property type="entry name" value="Ig-like_dom_sf"/>
</dbReference>
<dbReference type="InterPro" id="IPR013783">
    <property type="entry name" value="Ig-like_fold"/>
</dbReference>
<dbReference type="InterPro" id="IPR013098">
    <property type="entry name" value="Ig_I-set"/>
</dbReference>
<dbReference type="InterPro" id="IPR003599">
    <property type="entry name" value="Ig_sub"/>
</dbReference>
<dbReference type="InterPro" id="IPR003598">
    <property type="entry name" value="Ig_sub2"/>
</dbReference>
<dbReference type="InterPro" id="IPR040849">
    <property type="entry name" value="MyBP-C_THB"/>
</dbReference>
<dbReference type="InterPro" id="IPR050964">
    <property type="entry name" value="Striated_Muscle_Regulatory"/>
</dbReference>
<dbReference type="PANTHER" id="PTHR13817:SF138">
    <property type="entry name" value="IMMUNOGLOBULIN-LIKE AND FIBRONECTIN TYPE III DOMAIN-CONTAINING PROTEIN 1"/>
    <property type="match status" value="1"/>
</dbReference>
<dbReference type="PANTHER" id="PTHR13817">
    <property type="entry name" value="TITIN"/>
    <property type="match status" value="1"/>
</dbReference>
<dbReference type="Pfam" id="PF00041">
    <property type="entry name" value="fn3"/>
    <property type="match status" value="4"/>
</dbReference>
<dbReference type="Pfam" id="PF07679">
    <property type="entry name" value="I-set"/>
    <property type="match status" value="5"/>
</dbReference>
<dbReference type="Pfam" id="PF18362">
    <property type="entry name" value="THB"/>
    <property type="match status" value="1"/>
</dbReference>
<dbReference type="PRINTS" id="PR00014">
    <property type="entry name" value="FNTYPEIII"/>
</dbReference>
<dbReference type="SMART" id="SM00060">
    <property type="entry name" value="FN3"/>
    <property type="match status" value="4"/>
</dbReference>
<dbReference type="SMART" id="SM00409">
    <property type="entry name" value="IG"/>
    <property type="match status" value="7"/>
</dbReference>
<dbReference type="SMART" id="SM00408">
    <property type="entry name" value="IGc2"/>
    <property type="match status" value="4"/>
</dbReference>
<dbReference type="SUPFAM" id="SSF49265">
    <property type="entry name" value="Fibronectin type III"/>
    <property type="match status" value="3"/>
</dbReference>
<dbReference type="SUPFAM" id="SSF48726">
    <property type="entry name" value="Immunoglobulin"/>
    <property type="match status" value="7"/>
</dbReference>
<dbReference type="PROSITE" id="PS50853">
    <property type="entry name" value="FN3"/>
    <property type="match status" value="4"/>
</dbReference>
<dbReference type="PROSITE" id="PS50835">
    <property type="entry name" value="IG_LIKE"/>
    <property type="match status" value="4"/>
</dbReference>
<name>IGFN1_HUMAN</name>
<comment type="subunit">
    <text evidence="1 5">Interacts with FLNC (By similarity). Interacts with KY.</text>
</comment>
<comment type="interaction">
    <interactant intactId="EBI-10259767">
        <id>Q86VF2</id>
    </interactant>
    <interactant intactId="EBI-748397">
        <id>P50222</id>
        <label>MEOX2</label>
    </interactant>
    <organismsDiffer>false</organismsDiffer>
    <experiments>3</experiments>
</comment>
<comment type="interaction">
    <interactant intactId="EBI-11955401">
        <id>Q86VF2-5</id>
    </interactant>
    <interactant intactId="EBI-11976299">
        <id>Q5BKX5-3</id>
        <label>ACTMAP</label>
    </interactant>
    <organismsDiffer>false</organismsDiffer>
    <experiments>3</experiments>
</comment>
<comment type="interaction">
    <interactant intactId="EBI-11955401">
        <id>Q86VF2-5</id>
    </interactant>
    <interactant intactId="EBI-11524452">
        <id>Q8N9N5-2</id>
        <label>BANP</label>
    </interactant>
    <organismsDiffer>false</organismsDiffer>
    <experiments>3</experiments>
</comment>
<comment type="interaction">
    <interactant intactId="EBI-11955401">
        <id>Q86VF2-5</id>
    </interactant>
    <interactant intactId="EBI-2548012">
        <id>Q9H2G9</id>
        <label>BLZF1</label>
    </interactant>
    <organismsDiffer>false</organismsDiffer>
    <experiments>3</experiments>
</comment>
<comment type="interaction">
    <interactant intactId="EBI-11955401">
        <id>Q86VF2-5</id>
    </interactant>
    <interactant intactId="EBI-3866319">
        <id>Q9Y2V7</id>
        <label>COG6</label>
    </interactant>
    <organismsDiffer>false</organismsDiffer>
    <experiments>3</experiments>
</comment>
<comment type="interaction">
    <interactant intactId="EBI-11955401">
        <id>Q86VF2-5</id>
    </interactant>
    <interactant intactId="EBI-748171">
        <id>O43186</id>
        <label>CRX</label>
    </interactant>
    <organismsDiffer>false</organismsDiffer>
    <experiments>3</experiments>
</comment>
<comment type="interaction">
    <interactant intactId="EBI-11955401">
        <id>Q86VF2-5</id>
    </interactant>
    <interactant intactId="EBI-749139">
        <id>O95865</id>
        <label>DDAH2</label>
    </interactant>
    <organismsDiffer>false</organismsDiffer>
    <experiments>3</experiments>
</comment>
<comment type="interaction">
    <interactant intactId="EBI-11955401">
        <id>Q86VF2-5</id>
    </interactant>
    <interactant intactId="EBI-740459">
        <id>P51116</id>
        <label>FXR2</label>
    </interactant>
    <organismsDiffer>false</organismsDiffer>
    <experiments>3</experiments>
</comment>
<comment type="interaction">
    <interactant intactId="EBI-11955401">
        <id>Q86VF2-5</id>
    </interactant>
    <interactant intactId="EBI-618309">
        <id>Q08379</id>
        <label>GOLGA2</label>
    </interactant>
    <organismsDiffer>false</organismsDiffer>
    <experiments>3</experiments>
</comment>
<comment type="interaction">
    <interactant intactId="EBI-11955401">
        <id>Q86VF2-5</id>
    </interactant>
    <interactant intactId="EBI-740785">
        <id>P49639</id>
        <label>HOXA1</label>
    </interactant>
    <organismsDiffer>false</organismsDiffer>
    <experiments>3</experiments>
</comment>
<comment type="interaction">
    <interactant intactId="EBI-11955401">
        <id>Q86VF2-5</id>
    </interactant>
    <interactant intactId="EBI-3957655">
        <id>P31249</id>
        <label>HOXD3</label>
    </interactant>
    <organismsDiffer>false</organismsDiffer>
    <experiments>3</experiments>
</comment>
<comment type="interaction">
    <interactant intactId="EBI-11955401">
        <id>Q86VF2-5</id>
    </interactant>
    <interactant intactId="EBI-4397613">
        <id>Q7L273</id>
        <label>KCTD9</label>
    </interactant>
    <organismsDiffer>false</organismsDiffer>
    <experiments>3</experiments>
</comment>
<comment type="interaction">
    <interactant intactId="EBI-11955401">
        <id>Q86VF2-5</id>
    </interactant>
    <interactant intactId="EBI-14069005">
        <id>Q9BVG8-5</id>
        <label>KIFC3</label>
    </interactant>
    <organismsDiffer>false</organismsDiffer>
    <experiments>3</experiments>
</comment>
<comment type="interaction">
    <interactant intactId="EBI-11955401">
        <id>Q86VF2-5</id>
    </interactant>
    <interactant intactId="EBI-11958242">
        <id>Q6A163</id>
        <label>KRT39</label>
    </interactant>
    <organismsDiffer>false</organismsDiffer>
    <experiments>3</experiments>
</comment>
<comment type="interaction">
    <interactant intactId="EBI-11955401">
        <id>Q86VF2-5</id>
    </interactant>
    <interactant intactId="EBI-11962084">
        <id>Q3LI66</id>
        <label>KRTAP6-2</label>
    </interactant>
    <organismsDiffer>false</organismsDiffer>
    <experiments>3</experiments>
</comment>
<comment type="interaction">
    <interactant intactId="EBI-11955401">
        <id>Q86VF2-5</id>
    </interactant>
    <interactant intactId="EBI-10175218">
        <id>Q9NQ69</id>
        <label>LHX9</label>
    </interactant>
    <organismsDiffer>false</organismsDiffer>
    <experiments>3</experiments>
</comment>
<comment type="interaction">
    <interactant intactId="EBI-11955401">
        <id>Q86VF2-5</id>
    </interactant>
    <interactant intactId="EBI-741037">
        <id>Q9BRK4</id>
        <label>LZTS2</label>
    </interactant>
    <organismsDiffer>false</organismsDiffer>
    <experiments>3</experiments>
</comment>
<comment type="interaction">
    <interactant intactId="EBI-11955401">
        <id>Q86VF2-5</id>
    </interactant>
    <interactant intactId="EBI-16439278">
        <id>Q6FHY5</id>
        <label>MEOX2</label>
    </interactant>
    <organismsDiffer>false</organismsDiffer>
    <experiments>3</experiments>
</comment>
<comment type="interaction">
    <interactant intactId="EBI-11955401">
        <id>Q86VF2-5</id>
    </interactant>
    <interactant intactId="EBI-10172526">
        <id>Q9UJV3-2</id>
        <label>MID2</label>
    </interactant>
    <organismsDiffer>false</organismsDiffer>
    <experiments>3</experiments>
</comment>
<comment type="interaction">
    <interactant intactId="EBI-11955401">
        <id>Q86VF2-5</id>
    </interactant>
    <interactant intactId="EBI-488878">
        <id>P15172</id>
        <label>MYOD1</label>
    </interactant>
    <organismsDiffer>false</organismsDiffer>
    <experiments>3</experiments>
</comment>
<comment type="interaction">
    <interactant intactId="EBI-11955401">
        <id>Q86VF2-5</id>
    </interactant>
    <interactant intactId="EBI-12868744">
        <id>P0CG21</id>
        <label>NHLRC4</label>
    </interactant>
    <organismsDiffer>false</organismsDiffer>
    <experiments>3</experiments>
</comment>
<comment type="interaction">
    <interactant intactId="EBI-11955401">
        <id>Q86VF2-5</id>
    </interactant>
    <interactant intactId="EBI-14066006">
        <id>Q4G0R1</id>
        <label>PIBF1</label>
    </interactant>
    <organismsDiffer>false</organismsDiffer>
    <experiments>3</experiments>
</comment>
<comment type="interaction">
    <interactant intactId="EBI-11955401">
        <id>Q86VF2-5</id>
    </interactant>
    <interactant intactId="EBI-302345">
        <id>Q8ND90</id>
        <label>PNMA1</label>
    </interactant>
    <organismsDiffer>false</organismsDiffer>
    <experiments>3</experiments>
</comment>
<comment type="interaction">
    <interactant intactId="EBI-11955401">
        <id>Q86VF2-5</id>
    </interactant>
    <interactant intactId="EBI-11986735">
        <id>Q8WVV4-1</id>
        <label>POF1B</label>
    </interactant>
    <organismsDiffer>false</organismsDiffer>
    <experiments>3</experiments>
</comment>
<comment type="interaction">
    <interactant intactId="EBI-11955401">
        <id>Q86VF2-5</id>
    </interactant>
    <interactant intactId="EBI-12029004">
        <id>P78424</id>
        <label>POU6F2</label>
    </interactant>
    <organismsDiffer>false</organismsDiffer>
    <experiments>3</experiments>
</comment>
<comment type="interaction">
    <interactant intactId="EBI-11955401">
        <id>Q86VF2-5</id>
    </interactant>
    <interactant intactId="EBI-2805516">
        <id>P31321</id>
        <label>PRKAR1B</label>
    </interactant>
    <organismsDiffer>false</organismsDiffer>
    <experiments>3</experiments>
</comment>
<comment type="interaction">
    <interactant intactId="EBI-11955401">
        <id>Q86VF2-5</id>
    </interactant>
    <interactant intactId="EBI-12845180">
        <id>Q6ZRT6</id>
        <label>PRR23B</label>
    </interactant>
    <organismsDiffer>false</organismsDiffer>
    <experiments>3</experiments>
</comment>
<comment type="interaction">
    <interactant intactId="EBI-11955401">
        <id>Q86VF2-5</id>
    </interactant>
    <interactant intactId="EBI-2822051">
        <id>Q14140</id>
        <label>SERTAD2</label>
    </interactant>
    <organismsDiffer>false</organismsDiffer>
    <experiments>3</experiments>
</comment>
<comment type="interaction">
    <interactant intactId="EBI-11955401">
        <id>Q86VF2-5</id>
    </interactant>
    <interactant intactId="EBI-413317">
        <id>Q96R06</id>
        <label>SPAG5</label>
    </interactant>
    <organismsDiffer>false</organismsDiffer>
    <experiments>3</experiments>
</comment>
<comment type="interaction">
    <interactant intactId="EBI-11955401">
        <id>Q86VF2-5</id>
    </interactant>
    <interactant intactId="EBI-529518">
        <id>Q86VP1</id>
        <label>TAX1BP1</label>
    </interactant>
    <organismsDiffer>false</organismsDiffer>
    <experiments>3</experiments>
</comment>
<comment type="interaction">
    <interactant intactId="EBI-11955401">
        <id>Q86VF2-5</id>
    </interactant>
    <interactant intactId="EBI-81290">
        <id>P19474</id>
        <label>TRIM21</label>
    </interactant>
    <organismsDiffer>false</organismsDiffer>
    <experiments>3</experiments>
</comment>
<comment type="interaction">
    <interactant intactId="EBI-11955401">
        <id>Q86VF2-5</id>
    </interactant>
    <interactant intactId="EBI-719493">
        <id>P14373</id>
        <label>TRIM27</label>
    </interactant>
    <organismsDiffer>false</organismsDiffer>
    <experiments>3</experiments>
</comment>
<comment type="interaction">
    <interactant intactId="EBI-11955401">
        <id>Q86VF2-5</id>
    </interactant>
    <interactant intactId="EBI-17716262">
        <id>Q9UPQ4-2</id>
        <label>TRIM35</label>
    </interactant>
    <organismsDiffer>false</organismsDiffer>
    <experiments>3</experiments>
</comment>
<comment type="interaction">
    <interactant intactId="EBI-11955401">
        <id>Q86VF2-5</id>
    </interactant>
    <interactant intactId="EBI-5235829">
        <id>Q8IWZ5</id>
        <label>TRIM42</label>
    </interactant>
    <organismsDiffer>false</organismsDiffer>
    <experiments>3</experiments>
</comment>
<comment type="interaction">
    <interactant intactId="EBI-11955401">
        <id>Q86VF2-5</id>
    </interactant>
    <interactant intactId="EBI-358993">
        <id>Q15645</id>
        <label>TRIP13</label>
    </interactant>
    <organismsDiffer>false</organismsDiffer>
    <experiments>3</experiments>
</comment>
<comment type="interaction">
    <interactant intactId="EBI-11955401">
        <id>Q86VF2-5</id>
    </interactant>
    <interactant intactId="EBI-12806590">
        <id>Q86WV8</id>
        <label>TSC1</label>
    </interactant>
    <organismsDiffer>false</organismsDiffer>
    <experiments>3</experiments>
</comment>
<comment type="interaction">
    <interactant intactId="EBI-11955401">
        <id>Q86VF2-5</id>
    </interactant>
    <interactant intactId="EBI-2514383">
        <id>Q5T6F2</id>
        <label>UBAP2</label>
    </interactant>
    <organismsDiffer>false</organismsDiffer>
    <experiments>3</experiments>
</comment>
<comment type="interaction">
    <interactant intactId="EBI-11955401">
        <id>Q86VF2-5</id>
    </interactant>
    <interactant intactId="EBI-11975223">
        <id>Q70EL1-9</id>
        <label>USP54</label>
    </interactant>
    <organismsDiffer>false</organismsDiffer>
    <experiments>3</experiments>
</comment>
<comment type="interaction">
    <interactant intactId="EBI-11955401">
        <id>Q86VF2-5</id>
    </interactant>
    <interactant intactId="EBI-4395669">
        <id>Q6ZNG0</id>
        <label>ZNF620</label>
    </interactant>
    <organismsDiffer>false</organismsDiffer>
    <experiments>3</experiments>
</comment>
<comment type="interaction">
    <interactant intactId="EBI-11955401">
        <id>Q86VF2-5</id>
    </interactant>
    <interactant intactId="EBI-4395732">
        <id>P0C7X2</id>
        <label>ZNF688</label>
    </interactant>
    <organismsDiffer>false</organismsDiffer>
    <experiments>3</experiments>
</comment>
<comment type="subcellular location">
    <subcellularLocation>
        <location evidence="1">Nucleus</location>
    </subcellularLocation>
    <subcellularLocation>
        <location evidence="1">Cytoplasm</location>
        <location evidence="1">Myofibril</location>
        <location evidence="1">Sarcomere</location>
        <location evidence="1">Z line</location>
    </subcellularLocation>
</comment>
<comment type="alternative products">
    <event type="alternative splicing"/>
    <isoform>
        <id>Q86VF2-1</id>
        <name>1</name>
        <sequence type="displayed"/>
    </isoform>
    <isoform>
        <id>Q86VF2-2</id>
        <name>2</name>
        <sequence type="described" ref="VSP_035055 VSP_035056"/>
    </isoform>
    <isoform>
        <id>Q86VF2-3</id>
        <name>3</name>
        <sequence type="described" ref="VSP_035055 VSP_035056 VSP_035059 VSP_035060"/>
    </isoform>
    <isoform>
        <id>Q86VF2-4</id>
        <name>4</name>
        <sequence type="described" ref="VSP_035057 VSP_035058"/>
    </isoform>
    <isoform>
        <id>Q86VF2-5</id>
        <name>5</name>
        <sequence type="described" ref="VSP_045740"/>
    </isoform>
</comment>
<comment type="tissue specificity">
    <text evidence="5">Expressed in skeletal muscle.</text>
</comment>
<accession>Q86VF2</accession>
<accession>F8WAI1</accession>
<accession>Q9NT72</accession>
<reference key="1">
    <citation type="submission" date="2003-11" db="EMBL/GenBank/DDBJ databases">
        <title>Skeletal muscle specific eEF1A2 binding protein.</title>
        <authorList>
            <person name="Mansilla F."/>
            <person name="Garcia C.A."/>
            <person name="Knudsen C.R."/>
            <person name="Clark B.F.C."/>
        </authorList>
    </citation>
    <scope>NUCLEOTIDE SEQUENCE [MRNA] (ISOFORM 2)</scope>
    <scope>VARIANT TYR-1095</scope>
    <source>
        <tissue>Skeletal muscle</tissue>
    </source>
</reference>
<reference key="2">
    <citation type="journal article" date="2007" name="BMC Genomics">
        <title>The full-ORF clone resource of the German cDNA consortium.</title>
        <authorList>
            <person name="Bechtel S."/>
            <person name="Rosenfelder H."/>
            <person name="Duda A."/>
            <person name="Schmidt C.P."/>
            <person name="Ernst U."/>
            <person name="Wellenreuther R."/>
            <person name="Mehrle A."/>
            <person name="Schuster C."/>
            <person name="Bahr A."/>
            <person name="Bloecker H."/>
            <person name="Heubner D."/>
            <person name="Hoerlein A."/>
            <person name="Michel G."/>
            <person name="Wedler H."/>
            <person name="Koehrer K."/>
            <person name="Ottenwaelder B."/>
            <person name="Poustka A."/>
            <person name="Wiemann S."/>
            <person name="Schupp I."/>
        </authorList>
    </citation>
    <scope>NUCLEOTIDE SEQUENCE [LARGE SCALE MRNA] (ISOFORM 3)</scope>
    <source>
        <tissue>Testis</tissue>
    </source>
</reference>
<reference key="3">
    <citation type="journal article" date="2006" name="Nature">
        <title>The DNA sequence and biological annotation of human chromosome 1.</title>
        <authorList>
            <person name="Gregory S.G."/>
            <person name="Barlow K.F."/>
            <person name="McLay K.E."/>
            <person name="Kaul R."/>
            <person name="Swarbreck D."/>
            <person name="Dunham A."/>
            <person name="Scott C.E."/>
            <person name="Howe K.L."/>
            <person name="Woodfine K."/>
            <person name="Spencer C.C.A."/>
            <person name="Jones M.C."/>
            <person name="Gillson C."/>
            <person name="Searle S."/>
            <person name="Zhou Y."/>
            <person name="Kokocinski F."/>
            <person name="McDonald L."/>
            <person name="Evans R."/>
            <person name="Phillips K."/>
            <person name="Atkinson A."/>
            <person name="Cooper R."/>
            <person name="Jones C."/>
            <person name="Hall R.E."/>
            <person name="Andrews T.D."/>
            <person name="Lloyd C."/>
            <person name="Ainscough R."/>
            <person name="Almeida J.P."/>
            <person name="Ambrose K.D."/>
            <person name="Anderson F."/>
            <person name="Andrew R.W."/>
            <person name="Ashwell R.I.S."/>
            <person name="Aubin K."/>
            <person name="Babbage A.K."/>
            <person name="Bagguley C.L."/>
            <person name="Bailey J."/>
            <person name="Beasley H."/>
            <person name="Bethel G."/>
            <person name="Bird C.P."/>
            <person name="Bray-Allen S."/>
            <person name="Brown J.Y."/>
            <person name="Brown A.J."/>
            <person name="Buckley D."/>
            <person name="Burton J."/>
            <person name="Bye J."/>
            <person name="Carder C."/>
            <person name="Chapman J.C."/>
            <person name="Clark S.Y."/>
            <person name="Clarke G."/>
            <person name="Clee C."/>
            <person name="Cobley V."/>
            <person name="Collier R.E."/>
            <person name="Corby N."/>
            <person name="Coville G.J."/>
            <person name="Davies J."/>
            <person name="Deadman R."/>
            <person name="Dunn M."/>
            <person name="Earthrowl M."/>
            <person name="Ellington A.G."/>
            <person name="Errington H."/>
            <person name="Frankish A."/>
            <person name="Frankland J."/>
            <person name="French L."/>
            <person name="Garner P."/>
            <person name="Garnett J."/>
            <person name="Gay L."/>
            <person name="Ghori M.R.J."/>
            <person name="Gibson R."/>
            <person name="Gilby L.M."/>
            <person name="Gillett W."/>
            <person name="Glithero R.J."/>
            <person name="Grafham D.V."/>
            <person name="Griffiths C."/>
            <person name="Griffiths-Jones S."/>
            <person name="Grocock R."/>
            <person name="Hammond S."/>
            <person name="Harrison E.S.I."/>
            <person name="Hart E."/>
            <person name="Haugen E."/>
            <person name="Heath P.D."/>
            <person name="Holmes S."/>
            <person name="Holt K."/>
            <person name="Howden P.J."/>
            <person name="Hunt A.R."/>
            <person name="Hunt S.E."/>
            <person name="Hunter G."/>
            <person name="Isherwood J."/>
            <person name="James R."/>
            <person name="Johnson C."/>
            <person name="Johnson D."/>
            <person name="Joy A."/>
            <person name="Kay M."/>
            <person name="Kershaw J.K."/>
            <person name="Kibukawa M."/>
            <person name="Kimberley A.M."/>
            <person name="King A."/>
            <person name="Knights A.J."/>
            <person name="Lad H."/>
            <person name="Laird G."/>
            <person name="Lawlor S."/>
            <person name="Leongamornlert D.A."/>
            <person name="Lloyd D.M."/>
            <person name="Loveland J."/>
            <person name="Lovell J."/>
            <person name="Lush M.J."/>
            <person name="Lyne R."/>
            <person name="Martin S."/>
            <person name="Mashreghi-Mohammadi M."/>
            <person name="Matthews L."/>
            <person name="Matthews N.S.W."/>
            <person name="McLaren S."/>
            <person name="Milne S."/>
            <person name="Mistry S."/>
            <person name="Moore M.J.F."/>
            <person name="Nickerson T."/>
            <person name="O'Dell C.N."/>
            <person name="Oliver K."/>
            <person name="Palmeiri A."/>
            <person name="Palmer S.A."/>
            <person name="Parker A."/>
            <person name="Patel D."/>
            <person name="Pearce A.V."/>
            <person name="Peck A.I."/>
            <person name="Pelan S."/>
            <person name="Phelps K."/>
            <person name="Phillimore B.J."/>
            <person name="Plumb R."/>
            <person name="Rajan J."/>
            <person name="Raymond C."/>
            <person name="Rouse G."/>
            <person name="Saenphimmachak C."/>
            <person name="Sehra H.K."/>
            <person name="Sheridan E."/>
            <person name="Shownkeen R."/>
            <person name="Sims S."/>
            <person name="Skuce C.D."/>
            <person name="Smith M."/>
            <person name="Steward C."/>
            <person name="Subramanian S."/>
            <person name="Sycamore N."/>
            <person name="Tracey A."/>
            <person name="Tromans A."/>
            <person name="Van Helmond Z."/>
            <person name="Wall M."/>
            <person name="Wallis J.M."/>
            <person name="White S."/>
            <person name="Whitehead S.L."/>
            <person name="Wilkinson J.E."/>
            <person name="Willey D.L."/>
            <person name="Williams H."/>
            <person name="Wilming L."/>
            <person name="Wray P.W."/>
            <person name="Wu Z."/>
            <person name="Coulson A."/>
            <person name="Vaudin M."/>
            <person name="Sulston J.E."/>
            <person name="Durbin R.M."/>
            <person name="Hubbard T."/>
            <person name="Wooster R."/>
            <person name="Dunham I."/>
            <person name="Carter N.P."/>
            <person name="McVean G."/>
            <person name="Ross M.T."/>
            <person name="Harrow J."/>
            <person name="Olson M.V."/>
            <person name="Beck S."/>
            <person name="Rogers J."/>
            <person name="Bentley D.R."/>
        </authorList>
    </citation>
    <scope>NUCLEOTIDE SEQUENCE [LARGE SCALE GENOMIC DNA]</scope>
</reference>
<reference key="4">
    <citation type="submission" date="2005-07" db="EMBL/GenBank/DDBJ databases">
        <authorList>
            <person name="Mural R.J."/>
            <person name="Istrail S."/>
            <person name="Sutton G.G."/>
            <person name="Florea L."/>
            <person name="Halpern A.L."/>
            <person name="Mobarry C.M."/>
            <person name="Lippert R."/>
            <person name="Walenz B."/>
            <person name="Shatkay H."/>
            <person name="Dew I."/>
            <person name="Miller J.R."/>
            <person name="Flanigan M.J."/>
            <person name="Edwards N.J."/>
            <person name="Bolanos R."/>
            <person name="Fasulo D."/>
            <person name="Halldorsson B.V."/>
            <person name="Hannenhalli S."/>
            <person name="Turner R."/>
            <person name="Yooseph S."/>
            <person name="Lu F."/>
            <person name="Nusskern D.R."/>
            <person name="Shue B.C."/>
            <person name="Zheng X.H."/>
            <person name="Zhong F."/>
            <person name="Delcher A.L."/>
            <person name="Huson D.H."/>
            <person name="Kravitz S.A."/>
            <person name="Mouchard L."/>
            <person name="Reinert K."/>
            <person name="Remington K.A."/>
            <person name="Clark A.G."/>
            <person name="Waterman M.S."/>
            <person name="Eichler E.E."/>
            <person name="Adams M.D."/>
            <person name="Hunkapiller M.W."/>
            <person name="Myers E.W."/>
            <person name="Venter J.C."/>
        </authorList>
    </citation>
    <scope>NUCLEOTIDE SEQUENCE [LARGE SCALE GENOMIC DNA]</scope>
    <scope>VARIANT TYR-1095</scope>
</reference>
<reference key="5">
    <citation type="journal article" date="2004" name="Genome Res.">
        <title>The status, quality, and expansion of the NIH full-length cDNA project: the Mammalian Gene Collection (MGC).</title>
        <authorList>
            <consortium name="The MGC Project Team"/>
        </authorList>
    </citation>
    <scope>NUCLEOTIDE SEQUENCE [LARGE SCALE MRNA] (ISOFORMS 2 AND 4)</scope>
    <scope>VARIANT TYR-1095</scope>
</reference>
<reference key="6">
    <citation type="journal article" date="2004" name="Hum. Mol. Genet.">
        <title>Filamin C interacts with the muscular dystrophy KY protein and is abnormally distributed in mouse KY deficient muscle fibres.</title>
        <authorList>
            <person name="Beatham J."/>
            <person name="Romero R."/>
            <person name="Townsend S.K.M."/>
            <person name="Hacker T."/>
            <person name="van der Ven P.F.M."/>
            <person name="Blanco G."/>
        </authorList>
    </citation>
    <scope>INTERACTION WITH KY</scope>
    <scope>TISSUE SPECIFICITY</scope>
</reference>
<evidence type="ECO:0000250" key="1"/>
<evidence type="ECO:0000255" key="2"/>
<evidence type="ECO:0000255" key="3">
    <source>
        <dbReference type="PROSITE-ProRule" id="PRU00316"/>
    </source>
</evidence>
<evidence type="ECO:0000256" key="4">
    <source>
        <dbReference type="SAM" id="MobiDB-lite"/>
    </source>
</evidence>
<evidence type="ECO:0000269" key="5">
    <source>
    </source>
</evidence>
<evidence type="ECO:0000269" key="6">
    <source>
    </source>
</evidence>
<evidence type="ECO:0000269" key="7">
    <source ref="1"/>
</evidence>
<evidence type="ECO:0000269" key="8">
    <source ref="4"/>
</evidence>
<evidence type="ECO:0000303" key="9">
    <source>
    </source>
</evidence>
<evidence type="ECO:0000303" key="10">
    <source>
    </source>
</evidence>
<evidence type="ECO:0000303" key="11">
    <source ref="1"/>
</evidence>
<evidence type="ECO:0000305" key="12"/>
<feature type="chain" id="PRO_0000347186" description="Immunoglobulin-like and fibronectin type III domain-containing protein 1">
    <location>
        <begin position="1"/>
        <end position="1251"/>
    </location>
</feature>
<feature type="domain" description="Ig-like 1">
    <location>
        <begin position="29"/>
        <end position="119"/>
    </location>
</feature>
<feature type="domain" description="Ig-like 2">
    <location>
        <begin position="309"/>
        <end position="398"/>
    </location>
</feature>
<feature type="domain" description="Ig-like 3">
    <location>
        <begin position="454"/>
        <end position="539"/>
    </location>
</feature>
<feature type="domain" description="Fibronectin type-III 1" evidence="3">
    <location>
        <begin position="646"/>
        <end position="741"/>
    </location>
</feature>
<feature type="domain" description="Fibronectin type-III 2" evidence="3">
    <location>
        <begin position="746"/>
        <end position="845"/>
    </location>
</feature>
<feature type="domain" description="Fibronectin type-III 3" evidence="3">
    <location>
        <begin position="847"/>
        <end position="942"/>
    </location>
</feature>
<feature type="domain" description="Ig-like 4">
    <location>
        <begin position="946"/>
        <end position="1030"/>
    </location>
</feature>
<feature type="domain" description="Fibronectin type-III 4" evidence="3">
    <location>
        <begin position="1043"/>
        <end position="1137"/>
    </location>
</feature>
<feature type="domain" description="Ig-like 5">
    <location>
        <begin position="1151"/>
        <end position="1245"/>
    </location>
</feature>
<feature type="region of interest" description="Disordered" evidence="4">
    <location>
        <begin position="61"/>
        <end position="81"/>
    </location>
</feature>
<feature type="region of interest" description="Disordered" evidence="4">
    <location>
        <begin position="403"/>
        <end position="454"/>
    </location>
</feature>
<feature type="coiled-coil region" evidence="2">
    <location>
        <begin position="188"/>
        <end position="221"/>
    </location>
</feature>
<feature type="compositionally biased region" description="Basic and acidic residues" evidence="4">
    <location>
        <begin position="403"/>
        <end position="433"/>
    </location>
</feature>
<feature type="compositionally biased region" description="Polar residues" evidence="4">
    <location>
        <begin position="434"/>
        <end position="449"/>
    </location>
</feature>
<feature type="splice variant" id="VSP_035055" description="In isoform 2 and isoform 3." evidence="9 10 11">
    <location>
        <begin position="1"/>
        <end position="383"/>
    </location>
</feature>
<feature type="splice variant" id="VSP_035056" description="In isoform 2 and isoform 3." evidence="9 10 11">
    <original>TGLYTSSAWLVVEAGKDKDLQSTSADHKLQ</original>
    <variation>MGWQPMGENWGCLEEMLNEDQSREPPGHLG</variation>
    <location>
        <begin position="384"/>
        <end position="413"/>
    </location>
</feature>
<feature type="splice variant" id="VSP_045740" description="In isoform 5." evidence="12">
    <original>Q</original>
    <variation>QRQGAQASGAEESGSIESQGEKSREQGPRGGSLEGAGPASGLQHIASPDRDGLGRHGYSLMGDKGTADSAWGPGQEGEGFPVAEGSRATLPRENQSHREGGWARSLAERPHLQGESSESGLGLPEKQQQDRGRDSNSDECWRKAGGWEAGSSRLQAGGLGSSREGKEHRGDSGRQLDRHAPEQLWDARLGPGRGKSDLQGCQSDPVGSWPRGKQIEISQDDSLAEMDRGDAPSRERGRGIVVWGGGTGLGEAGDSNGAGGPGTLELTGGRGSGSKVGMAPESWGSQGGRDADYGEARGYWGSGELLEQIPGGKDFQEPSISGGRKFLLGDGSPEIKAEDSLQEADGICRGESVVTGSAYKTGPGGPGDPRGCEGVLQELRGRDGQETAWASGEVEYDPRSFQSSQGWTAGHRAAGGIGRIESKGTSPWDDTPSSLRKTGAHHGPGVLGPSGGQEGMGGIWVAGLTESGQGVDARSHWLSRAPGLGAQGSGGTLGDKKGLRGPGSIGSEPDFWNGSGSSRVKGPRGETGYKDGLEGPGRMESRYEGGLGYSREISSKSGAGYSYGSGVPGEMGSGHGAGCRVSPRAPAGVESEEGGGYRHGSGAPGGVWSGNEDSGPAGGGSGRVASLKNGSGGPDGAPMNDTRNWASACQAGMDPRGGHHSDGGLGSPGVTGSAGRGGLKAPGVVETVGMGCVEAEPESSGRIRPWGQTGNYGGFRASEALGAFGEGGYEDGSGGPGAMGPGSLRAGSKVGEGDGTRCPGAKASGAGAGYRDDTRHPESLAPHNGAASGSQWAYGAGNVLGYEDGSELPGPQGTGVRTAYGERSRGLGPRSTGPGGEAGFRDGSGGLQGMGSADGPGCRKGIGSSGEMGSVDKEGYKKDLGAPENMGSGSKADYRDGVGGSGAMGSMDEAGYRKDLGAPEGISSGSKADYRGGLQDSREAGSGSKADYSGGLKGSREIGSMDETDNRKDLGVPEGMGAGYRAGLRGPGEMGSLDESGHRNGIGGYGEMGSGYREDLGAPEGMGTGSKAGYRDGLRGSGEMRSMDEAGYRKNLGAPERMDSGSKAGYRGGLRGSGEMGLIEAGYRKDLGVSEGGGSGSKAGYRGGLGSGEMGSVDKAGYRKDLGASEAIGSGSKAGFTDGLGGSEEMGSVNKAGYRKDLGAPKGMGSGSKASFRDGLGGSGEMGSVNEAGYRKDLGVPEGIGSGSKAGFRDGLGGSEEMGSVNKAGYRKDLGAPKGIGSGSKAGFRDGLGSSGEMGSMDEAGYRKNLGAPEGIGSGSKAGFRDGLGSSVEMGSVNEAGYRKDLGAPEGMGSGSKAGFRDGLGGSGEMGSVNEAGYRKDLGAPKGIGSGSKADFRDALGSSGEMGSMDEAGYRKDLWAPEGIGSGSKAGFRDGLGSSVEMGSVNEAGYRKDLGAPEGMGSGSKAGFRDGLGGSGEMGSVNEAGYRKDLGAPKGIGSGSKADFRDALGSSGEMGSMDEAGYRKDLWAPEGIGSGSKAGFRDGLGSSVEMGSVNEAGYRKDLGAPEGMGSGSKEGFRDGLGGSEEMGSVNKAGYRKDLGAPKGMGSGSKEGFRDGLGGSEEMGSMDEAGYRKDLGAPEGIGSGSKAGFRDGLGGSEEMRSMDEAGYRKDLGAPERIGSGSKAGFRDGLGSSVEMGSVNEAGYRKDLGAPKGMGSGSKTGFRDGLGGSEEMESMDEAGYRKDLGAPEGIGSGSKAGFRDGLGSSTEMGSVNEAGYRKDLGAPKGMGSESKAGFRDGLGSSGEMGSMDEAGYRKDLGAPEGMGSGSKAGFRDGLGGSEEMGSVNKAGYRKDLGAPKGMGSGSKAGFRDGLGSSGEMGSMDEADYRKDLGAPEEMGSGSYTDYRNGLGSSGKISSGDEAGYKNVLGGSGRNPLGSEAGSRGSLEDSGYILSWNEAGSRQGFGGTSGMGSGSEVSYRGGSGGSGETGPEGKMGYGDGSGRLGVPGSLAGIGHEAGPRGHKAMGHRSGYWVASEGDTNSKDGPERARETRLVDGAGPGVEPGMAGMPGTAGGMAHRDSLRGTGVLGSQGGRQTLSDERGSTKDLGGYGTSGIPEASEAAGAKGKPDVKEWQDSSGTPGSSRDRGAPRVKDRSPDQAGIMGASGFLDGKGAVEGETWAGMAALGSGYERDIWKAGPGMTDRGRVAGQGGLASQGGGDSLLGGRRVGSGSSVGTGQDLDSGSMPGGRGKSTSGPADRQGTSNAWAPDWENQGFSQGSIDAGKQPAGSRASGSLQEKDAAFGGTHEGPGGFKGGEGAPGQEAAGGCRSPWSLDSKGSSPGRGSSVDAEDSGILGKGNSTEWGNALTPKPGESGPQGAWNGLDGPFGRKASRDRSGGTQDLSSQRGKGQRGGKRSLGEQGSLEAENGEVQGPGALKEDEGQGVEEAGRSGRRPGSLRSRSQAQSGAEVGGGKRRGADEAGSMGWQPMGENWGCLEEMLNEDQSREPPGHLG</variation>
    <location>
        <position position="413"/>
    </location>
</feature>
<feature type="splice variant" id="VSP_035057" description="In isoform 4." evidence="9">
    <original>VIVKI</original>
    <variation>IQTYH</variation>
    <location>
        <begin position="566"/>
        <end position="570"/>
    </location>
</feature>
<feature type="splice variant" id="VSP_035058" description="In isoform 4." evidence="9">
    <location>
        <begin position="571"/>
        <end position="1251"/>
    </location>
</feature>
<feature type="splice variant" id="VSP_035059" description="In isoform 3." evidence="10">
    <original>AMPMPEVTWLKDGLP</original>
    <variation>HARRPLGPSTCRRTC</variation>
    <location>
        <begin position="974"/>
        <end position="988"/>
    </location>
</feature>
<feature type="splice variant" id="VSP_035060" description="In isoform 3." evidence="10">
    <location>
        <begin position="989"/>
        <end position="1251"/>
    </location>
</feature>
<feature type="sequence variant" id="VAR_046035" description="In dbSNP:rs6690992.">
    <original>T</original>
    <variation>M</variation>
    <location>
        <position position="1056"/>
    </location>
</feature>
<feature type="sequence variant" id="VAR_046036" description="In dbSNP:rs3738270." evidence="6 7 8">
    <original>H</original>
    <variation>Y</variation>
    <location>
        <position position="1095"/>
    </location>
</feature>
<gene>
    <name type="primary">IGFN1</name>
    <name type="synonym">EEF1A2BP1</name>
    <name type="synonym">KYIP1</name>
</gene>
<organism>
    <name type="scientific">Homo sapiens</name>
    <name type="common">Human</name>
    <dbReference type="NCBI Taxonomy" id="9606"/>
    <lineage>
        <taxon>Eukaryota</taxon>
        <taxon>Metazoa</taxon>
        <taxon>Chordata</taxon>
        <taxon>Craniata</taxon>
        <taxon>Vertebrata</taxon>
        <taxon>Euteleostomi</taxon>
        <taxon>Mammalia</taxon>
        <taxon>Eutheria</taxon>
        <taxon>Euarchontoglires</taxon>
        <taxon>Primates</taxon>
        <taxon>Haplorrhini</taxon>
        <taxon>Catarrhini</taxon>
        <taxon>Hominidae</taxon>
        <taxon>Homo</taxon>
    </lineage>
</organism>